<comment type="function">
    <text evidence="1">RNA polymerase that catalyzes the synthesis of short RNA molecules used as primers for DNA polymerase during DNA replication.</text>
</comment>
<comment type="catalytic activity">
    <reaction evidence="1">
        <text>ssDNA + n NTP = ssDNA/pppN(pN)n-1 hybrid + (n-1) diphosphate.</text>
        <dbReference type="EC" id="2.7.7.101"/>
    </reaction>
</comment>
<comment type="cofactor">
    <cofactor evidence="1">
        <name>Mg(2+)</name>
        <dbReference type="ChEBI" id="CHEBI:18420"/>
    </cofactor>
    <text evidence="1">Binds two Mg(2+) per subunit.</text>
</comment>
<comment type="subunit">
    <text evidence="1">Forms a ternary complex with MCM helicase and DNA.</text>
</comment>
<comment type="similarity">
    <text evidence="1">Belongs to the archaeal DnaG primase family.</text>
</comment>
<evidence type="ECO:0000255" key="1">
    <source>
        <dbReference type="HAMAP-Rule" id="MF_00007"/>
    </source>
</evidence>
<feature type="chain" id="PRO_1000089137" description="DNA primase DnaG">
    <location>
        <begin position="1"/>
        <end position="438"/>
    </location>
</feature>
<feature type="domain" description="Toprim" evidence="1">
    <location>
        <begin position="169"/>
        <end position="243"/>
    </location>
</feature>
<feature type="binding site" evidence="1">
    <location>
        <position position="175"/>
    </location>
    <ligand>
        <name>Mg(2+)</name>
        <dbReference type="ChEBI" id="CHEBI:18420"/>
        <label>1</label>
        <note>catalytic</note>
    </ligand>
</feature>
<feature type="binding site" evidence="1">
    <location>
        <position position="217"/>
    </location>
    <ligand>
        <name>Mg(2+)</name>
        <dbReference type="ChEBI" id="CHEBI:18420"/>
        <label>1</label>
        <note>catalytic</note>
    </ligand>
</feature>
<feature type="binding site" evidence="1">
    <location>
        <position position="217"/>
    </location>
    <ligand>
        <name>Mg(2+)</name>
        <dbReference type="ChEBI" id="CHEBI:18420"/>
        <label>2</label>
    </ligand>
</feature>
<feature type="binding site" evidence="1">
    <location>
        <position position="219"/>
    </location>
    <ligand>
        <name>Mg(2+)</name>
        <dbReference type="ChEBI" id="CHEBI:18420"/>
        <label>2</label>
    </ligand>
</feature>
<sequence length="438" mass="49116">MDLGTTKYIIYTELIADGYVEKHDVIGAIFGQTEGLLSNELDLRDLQKSGRIGRIDVDLENINGKSFAKITLPSSLDKVETSILAATLETIDRVGPCFATVKITEVEDIRVSKRQYITNRARSILRKLMDEMIDTYEITEEIKESLRTEEIMEFGPENLPCGPNVVHSDSIIVVEGRADVLNLLRCGIKNTVAVEGTSVPKSIMDLTKKKTTTAFTDGDRGGELILKELLQTCDIDYVARAPYGKEVEGTSKKEIMKCLRAKVPVEQIVGNTCNDTCNVSKVIENRPEEIVEPITHKYYEKVETPVTEPVFEDEIVEEETVIVEPVKKTETEIIDVDATNEIQADKKFSGVKEIVDSIKNTGNVKFVVDGTEKTNTFKEFLTNIHEIKKMDFFAADMPISQKIVDLLYDKTPIIVGKEIHVTKKPVNLRLFSFDEIVA</sequence>
<protein>
    <recommendedName>
        <fullName evidence="1">DNA primase DnaG</fullName>
        <ecNumber evidence="1">2.7.7.101</ecNumber>
    </recommendedName>
</protein>
<dbReference type="EC" id="2.7.7.101" evidence="1"/>
<dbReference type="EMBL" id="CP000867">
    <property type="protein sequence ID" value="ABX02201.1"/>
    <property type="molecule type" value="Genomic_DNA"/>
</dbReference>
<dbReference type="STRING" id="444158.MmarC6_1388"/>
<dbReference type="KEGG" id="mmx:MmarC6_1388"/>
<dbReference type="eggNOG" id="arCOG04281">
    <property type="taxonomic scope" value="Archaea"/>
</dbReference>
<dbReference type="HOGENOM" id="CLU_034626_0_0_2"/>
<dbReference type="OrthoDB" id="8643at2157"/>
<dbReference type="PhylomeDB" id="A9AA28"/>
<dbReference type="GO" id="GO:0005737">
    <property type="term" value="C:cytoplasm"/>
    <property type="evidence" value="ECO:0007669"/>
    <property type="project" value="TreeGrafter"/>
</dbReference>
<dbReference type="GO" id="GO:0000428">
    <property type="term" value="C:DNA-directed RNA polymerase complex"/>
    <property type="evidence" value="ECO:0007669"/>
    <property type="project" value="UniProtKB-KW"/>
</dbReference>
<dbReference type="GO" id="GO:0000178">
    <property type="term" value="C:exosome (RNase complex)"/>
    <property type="evidence" value="ECO:0007669"/>
    <property type="project" value="InterPro"/>
</dbReference>
<dbReference type="GO" id="GO:1990077">
    <property type="term" value="C:primosome complex"/>
    <property type="evidence" value="ECO:0007669"/>
    <property type="project" value="UniProtKB-KW"/>
</dbReference>
<dbReference type="GO" id="GO:0003899">
    <property type="term" value="F:DNA-directed RNA polymerase activity"/>
    <property type="evidence" value="ECO:0007669"/>
    <property type="project" value="InterPro"/>
</dbReference>
<dbReference type="GO" id="GO:0046872">
    <property type="term" value="F:metal ion binding"/>
    <property type="evidence" value="ECO:0007669"/>
    <property type="project" value="UniProtKB-KW"/>
</dbReference>
<dbReference type="GO" id="GO:0008143">
    <property type="term" value="F:poly(A) binding"/>
    <property type="evidence" value="ECO:0007669"/>
    <property type="project" value="InterPro"/>
</dbReference>
<dbReference type="GO" id="GO:0006269">
    <property type="term" value="P:DNA replication, synthesis of primer"/>
    <property type="evidence" value="ECO:0007669"/>
    <property type="project" value="UniProtKB-UniRule"/>
</dbReference>
<dbReference type="CDD" id="cd01029">
    <property type="entry name" value="TOPRIM_primases"/>
    <property type="match status" value="1"/>
</dbReference>
<dbReference type="FunFam" id="3.40.1360.10:FF:000010">
    <property type="entry name" value="DNA primase DnaG"/>
    <property type="match status" value="1"/>
</dbReference>
<dbReference type="Gene3D" id="3.40.1360.10">
    <property type="match status" value="1"/>
</dbReference>
<dbReference type="HAMAP" id="MF_00007">
    <property type="entry name" value="DNA_primase_DnaG_arc"/>
    <property type="match status" value="1"/>
</dbReference>
<dbReference type="InterPro" id="IPR050219">
    <property type="entry name" value="DnaG_primase"/>
</dbReference>
<dbReference type="InterPro" id="IPR020607">
    <property type="entry name" value="Primase_DnaG_arc"/>
</dbReference>
<dbReference type="InterPro" id="IPR034154">
    <property type="entry name" value="TOPRIM_DnaG/twinkle"/>
</dbReference>
<dbReference type="InterPro" id="IPR006171">
    <property type="entry name" value="TOPRIM_dom"/>
</dbReference>
<dbReference type="NCBIfam" id="NF003108">
    <property type="entry name" value="PRK04031.1-1"/>
    <property type="match status" value="1"/>
</dbReference>
<dbReference type="PANTHER" id="PTHR30313">
    <property type="entry name" value="DNA PRIMASE"/>
    <property type="match status" value="1"/>
</dbReference>
<dbReference type="PANTHER" id="PTHR30313:SF2">
    <property type="entry name" value="DNA PRIMASE"/>
    <property type="match status" value="1"/>
</dbReference>
<dbReference type="Pfam" id="PF13662">
    <property type="entry name" value="Toprim_4"/>
    <property type="match status" value="1"/>
</dbReference>
<dbReference type="SMART" id="SM00493">
    <property type="entry name" value="TOPRIM"/>
    <property type="match status" value="1"/>
</dbReference>
<dbReference type="SUPFAM" id="SSF56731">
    <property type="entry name" value="DNA primase core"/>
    <property type="match status" value="1"/>
</dbReference>
<dbReference type="PROSITE" id="PS50880">
    <property type="entry name" value="TOPRIM"/>
    <property type="match status" value="1"/>
</dbReference>
<name>DNAG_METM6</name>
<reference key="1">
    <citation type="submission" date="2007-10" db="EMBL/GenBank/DDBJ databases">
        <title>Complete sequence of Methanococcus maripaludis C6.</title>
        <authorList>
            <consortium name="US DOE Joint Genome Institute"/>
            <person name="Copeland A."/>
            <person name="Lucas S."/>
            <person name="Lapidus A."/>
            <person name="Barry K."/>
            <person name="Glavina del Rio T."/>
            <person name="Dalin E."/>
            <person name="Tice H."/>
            <person name="Pitluck S."/>
            <person name="Clum A."/>
            <person name="Schmutz J."/>
            <person name="Larimer F."/>
            <person name="Land M."/>
            <person name="Hauser L."/>
            <person name="Kyrpides N."/>
            <person name="Mikhailova N."/>
            <person name="Sieprawska-Lupa M."/>
            <person name="Whitman W.B."/>
            <person name="Richardson P."/>
        </authorList>
    </citation>
    <scope>NUCLEOTIDE SEQUENCE [LARGE SCALE GENOMIC DNA]</scope>
    <source>
        <strain>C6 / ATCC BAA-1332</strain>
    </source>
</reference>
<proteinExistence type="inferred from homology"/>
<gene>
    <name evidence="1" type="primary">dnaG</name>
    <name type="ordered locus">MmarC6_1388</name>
</gene>
<organism>
    <name type="scientific">Methanococcus maripaludis (strain C6 / ATCC BAA-1332)</name>
    <dbReference type="NCBI Taxonomy" id="444158"/>
    <lineage>
        <taxon>Archaea</taxon>
        <taxon>Methanobacteriati</taxon>
        <taxon>Methanobacteriota</taxon>
        <taxon>Methanomada group</taxon>
        <taxon>Methanococci</taxon>
        <taxon>Methanococcales</taxon>
        <taxon>Methanococcaceae</taxon>
        <taxon>Methanococcus</taxon>
    </lineage>
</organism>
<accession>A9AA28</accession>
<keyword id="KW-0235">DNA replication</keyword>
<keyword id="KW-0240">DNA-directed RNA polymerase</keyword>
<keyword id="KW-0460">Magnesium</keyword>
<keyword id="KW-0479">Metal-binding</keyword>
<keyword id="KW-0548">Nucleotidyltransferase</keyword>
<keyword id="KW-0639">Primosome</keyword>
<keyword id="KW-0804">Transcription</keyword>
<keyword id="KW-0808">Transferase</keyword>